<gene>
    <name type="primary">Lmf2</name>
</gene>
<proteinExistence type="evidence at transcript level"/>
<feature type="chain" id="PRO_0000324512" description="Lipase maturation factor 2">
    <location>
        <begin position="1"/>
        <end position="702"/>
    </location>
</feature>
<feature type="transmembrane region" description="Helical" evidence="2">
    <location>
        <begin position="10"/>
        <end position="30"/>
    </location>
</feature>
<feature type="transmembrane region" description="Helical" evidence="2">
    <location>
        <begin position="75"/>
        <end position="95"/>
    </location>
</feature>
<feature type="transmembrane region" description="Helical" evidence="2">
    <location>
        <begin position="102"/>
        <end position="122"/>
    </location>
</feature>
<feature type="transmembrane region" description="Helical" evidence="2">
    <location>
        <begin position="123"/>
        <end position="143"/>
    </location>
</feature>
<feature type="transmembrane region" description="Helical" evidence="2">
    <location>
        <begin position="164"/>
        <end position="184"/>
    </location>
</feature>
<feature type="transmembrane region" description="Helical" evidence="2">
    <location>
        <begin position="226"/>
        <end position="246"/>
    </location>
</feature>
<feature type="transmembrane region" description="Helical" evidence="2">
    <location>
        <begin position="259"/>
        <end position="279"/>
    </location>
</feature>
<feature type="transmembrane region" description="Helical" evidence="2">
    <location>
        <begin position="316"/>
        <end position="336"/>
    </location>
</feature>
<feature type="transmembrane region" description="Helical" evidence="2">
    <location>
        <begin position="363"/>
        <end position="383"/>
    </location>
</feature>
<feature type="transmembrane region" description="Helical" evidence="2">
    <location>
        <begin position="396"/>
        <end position="416"/>
    </location>
</feature>
<feature type="transmembrane region" description="Helical" evidence="2">
    <location>
        <begin position="628"/>
        <end position="648"/>
    </location>
</feature>
<feature type="region of interest" description="Disordered" evidence="3">
    <location>
        <begin position="660"/>
        <end position="702"/>
    </location>
</feature>
<feature type="compositionally biased region" description="Basic and acidic residues" evidence="3">
    <location>
        <begin position="665"/>
        <end position="681"/>
    </location>
</feature>
<feature type="compositionally biased region" description="Polar residues" evidence="3">
    <location>
        <begin position="682"/>
        <end position="695"/>
    </location>
</feature>
<feature type="glycosylation site" description="N-linked (GlcNAc...) asparagine" evidence="2">
    <location>
        <position position="488"/>
    </location>
</feature>
<name>LMF2_RAT</name>
<sequence length="702" mass="80254">MASARVPQQLFLQGVAAVYLFAFASLYTQIPGLYGPEGILPARRTLRPQGKGRWQQLWETPTILWEAPRLGLDTAQGLDLLTLLGTVLALGALLLNSLRHPFIYLLLWAAYLSACQVGQVFLYFQWDSLLLETGFLAILVAPLRRPSKHKIPQGGLAGALPHEDLPFWLVRWLLFRLMFASGVVKLTSRCPAWWGLTALTYHYETQCLPTPAAWFAHHLPVWLHRLSVVATFLIEIAVPPLFFAPIRRLRLSAFYAQALLQILIIITGNYNFFNLLTLVLTTALLDDRHLSAEPELRCHKKMPTSWPKTLLTSLSLMLELTVYGLLAYGTIYYFGLEVDWQQQIVLSKTTFTFHQFSQWLKMVTLPTVWLGTASLAWELLIALWRWIQVQGWSRKFFAGIQLSVLGTATVFLFLISLVPYSYVEPGTHGRLWTGAHRLFSSVEHLQLANSYGLFRRMTGLGGRPEVVLEGSHDGHHWTEIEFMYKPGNVSRPPPFLIPHQPRLDWQMWFAALGPHTHSPWFTSLVLRLLQGKEPVIRLIQNQVANYPFREQPPTYLRAQRYKYWFSKPGDQSRWWHRQWVEEFFPSVSLGDPTLETLLQQFGLKDKSPPRARSSKNALAQTLNWVRAQLSPLEPSILLWGLLGAVVAIRVVRTLLTPRPLQSSKQTREEKRKQAPKKDSRAVSEQTAPNSNSNGSWAPRRKK</sequence>
<protein>
    <recommendedName>
        <fullName>Lipase maturation factor 2</fullName>
    </recommendedName>
</protein>
<organism>
    <name type="scientific">Rattus norvegicus</name>
    <name type="common">Rat</name>
    <dbReference type="NCBI Taxonomy" id="10116"/>
    <lineage>
        <taxon>Eukaryota</taxon>
        <taxon>Metazoa</taxon>
        <taxon>Chordata</taxon>
        <taxon>Craniata</taxon>
        <taxon>Vertebrata</taxon>
        <taxon>Euteleostomi</taxon>
        <taxon>Mammalia</taxon>
        <taxon>Eutheria</taxon>
        <taxon>Euarchontoglires</taxon>
        <taxon>Glires</taxon>
        <taxon>Rodentia</taxon>
        <taxon>Myomorpha</taxon>
        <taxon>Muroidea</taxon>
        <taxon>Muridae</taxon>
        <taxon>Murinae</taxon>
        <taxon>Rattus</taxon>
    </lineage>
</organism>
<keyword id="KW-0256">Endoplasmic reticulum</keyword>
<keyword id="KW-0325">Glycoprotein</keyword>
<keyword id="KW-0472">Membrane</keyword>
<keyword id="KW-1185">Reference proteome</keyword>
<keyword id="KW-0812">Transmembrane</keyword>
<keyword id="KW-1133">Transmembrane helix</keyword>
<reference key="1">
    <citation type="journal article" date="2004" name="Genome Res.">
        <title>The status, quality, and expansion of the NIH full-length cDNA project: the Mammalian Gene Collection (MGC).</title>
        <authorList>
            <consortium name="The MGC Project Team"/>
        </authorList>
    </citation>
    <scope>NUCLEOTIDE SEQUENCE [LARGE SCALE MRNA]</scope>
    <source>
        <tissue>Lung</tissue>
        <tissue>Spleen</tissue>
    </source>
</reference>
<accession>A1L1J9</accession>
<accession>Q5I0G9</accession>
<evidence type="ECO:0000250" key="1"/>
<evidence type="ECO:0000255" key="2"/>
<evidence type="ECO:0000256" key="3">
    <source>
        <dbReference type="SAM" id="MobiDB-lite"/>
    </source>
</evidence>
<evidence type="ECO:0000305" key="4"/>
<dbReference type="EMBL" id="BC088333">
    <property type="protein sequence ID" value="AAH88333.1"/>
    <property type="molecule type" value="mRNA"/>
</dbReference>
<dbReference type="EMBL" id="BC129102">
    <property type="protein sequence ID" value="AAI29103.1"/>
    <property type="molecule type" value="mRNA"/>
</dbReference>
<dbReference type="RefSeq" id="NP_001073408.1">
    <property type="nucleotide sequence ID" value="NM_001079939.1"/>
</dbReference>
<dbReference type="FunCoup" id="A1L1J9">
    <property type="interactions" value="1499"/>
</dbReference>
<dbReference type="STRING" id="10116.ENSRNOP00000051363"/>
<dbReference type="GlyCosmos" id="A1L1J9">
    <property type="glycosylation" value="1 site, No reported glycans"/>
</dbReference>
<dbReference type="GlyGen" id="A1L1J9">
    <property type="glycosylation" value="1 site"/>
</dbReference>
<dbReference type="PhosphoSitePlus" id="A1L1J9"/>
<dbReference type="PaxDb" id="10116-ENSRNOP00000051363"/>
<dbReference type="PeptideAtlas" id="A1L1J9"/>
<dbReference type="GeneID" id="315218"/>
<dbReference type="KEGG" id="rno:315218"/>
<dbReference type="AGR" id="RGD:1306274"/>
<dbReference type="CTD" id="91289"/>
<dbReference type="RGD" id="1306274">
    <property type="gene designation" value="Lmf2"/>
</dbReference>
<dbReference type="eggNOG" id="ENOG502QTN6">
    <property type="taxonomic scope" value="Eukaryota"/>
</dbReference>
<dbReference type="HOGENOM" id="CLU_020557_1_0_1"/>
<dbReference type="InParanoid" id="A1L1J9"/>
<dbReference type="OrthoDB" id="64313at9989"/>
<dbReference type="PhylomeDB" id="A1L1J9"/>
<dbReference type="TreeFam" id="TF314339"/>
<dbReference type="Reactome" id="R-RNO-8963889">
    <property type="pathway name" value="Assembly of active LPL and LIPC lipase complexes"/>
</dbReference>
<dbReference type="PRO" id="PR:A1L1J9"/>
<dbReference type="Proteomes" id="UP000002494">
    <property type="component" value="Chromosome 7"/>
</dbReference>
<dbReference type="Bgee" id="ENSRNOG00000030633">
    <property type="expression patterns" value="Expressed in lung and 20 other cell types or tissues"/>
</dbReference>
<dbReference type="GO" id="GO:0005789">
    <property type="term" value="C:endoplasmic reticulum membrane"/>
    <property type="evidence" value="ECO:0000318"/>
    <property type="project" value="GO_Central"/>
</dbReference>
<dbReference type="GO" id="GO:0051604">
    <property type="term" value="P:protein maturation"/>
    <property type="evidence" value="ECO:0000318"/>
    <property type="project" value="GO_Central"/>
</dbReference>
<dbReference type="InterPro" id="IPR009613">
    <property type="entry name" value="LMF"/>
</dbReference>
<dbReference type="PANTHER" id="PTHR14463">
    <property type="entry name" value="LIPASE MATURATION FACTOR"/>
    <property type="match status" value="1"/>
</dbReference>
<dbReference type="PANTHER" id="PTHR14463:SF5">
    <property type="entry name" value="LIPASE MATURATION FACTOR 2"/>
    <property type="match status" value="1"/>
</dbReference>
<dbReference type="Pfam" id="PF06762">
    <property type="entry name" value="LMF1"/>
    <property type="match status" value="1"/>
</dbReference>
<dbReference type="Pfam" id="PF25179">
    <property type="entry name" value="LMF1_C"/>
    <property type="match status" value="1"/>
</dbReference>
<comment type="function">
    <text evidence="1">Involved in the maturation of specific proteins in the endoplasmic reticulum. May be required for maturation and transport of active lipoprotein lipase (LPL) through the secretory pathway (By similarity).</text>
</comment>
<comment type="subcellular location">
    <subcellularLocation>
        <location evidence="1">Endoplasmic reticulum membrane</location>
        <topology evidence="1">Multi-pass membrane protein</topology>
    </subcellularLocation>
</comment>
<comment type="similarity">
    <text evidence="4">Belongs to the lipase maturation factor family.</text>
</comment>